<gene>
    <name evidence="1" type="primary">prs</name>
    <name type="synonym">prsA</name>
    <name type="ordered locus">HD_1627</name>
</gene>
<protein>
    <recommendedName>
        <fullName evidence="1">Ribose-phosphate pyrophosphokinase</fullName>
        <shortName evidence="1">RPPK</shortName>
        <ecNumber evidence="1">2.7.6.1</ecNumber>
    </recommendedName>
    <alternativeName>
        <fullName evidence="1">5-phospho-D-ribosyl alpha-1-diphosphate synthase</fullName>
    </alternativeName>
    <alternativeName>
        <fullName evidence="1">Phosphoribosyl diphosphate synthase</fullName>
    </alternativeName>
    <alternativeName>
        <fullName evidence="1">Phosphoribosyl pyrophosphate synthase</fullName>
        <shortName evidence="1">P-Rib-PP synthase</shortName>
        <shortName evidence="1">PRPP synthase</shortName>
        <shortName evidence="1">PRPPase</shortName>
    </alternativeName>
</protein>
<feature type="chain" id="PRO_0000141141" description="Ribose-phosphate pyrophosphokinase">
    <location>
        <begin position="1"/>
        <end position="316"/>
    </location>
</feature>
<feature type="active site" evidence="1">
    <location>
        <position position="195"/>
    </location>
</feature>
<feature type="binding site" evidence="1">
    <location>
        <begin position="37"/>
        <end position="39"/>
    </location>
    <ligand>
        <name>ATP</name>
        <dbReference type="ChEBI" id="CHEBI:30616"/>
    </ligand>
</feature>
<feature type="binding site" evidence="1">
    <location>
        <begin position="96"/>
        <end position="97"/>
    </location>
    <ligand>
        <name>ATP</name>
        <dbReference type="ChEBI" id="CHEBI:30616"/>
    </ligand>
</feature>
<feature type="binding site" evidence="1">
    <location>
        <position position="131"/>
    </location>
    <ligand>
        <name>Mg(2+)</name>
        <dbReference type="ChEBI" id="CHEBI:18420"/>
        <label>1</label>
    </ligand>
</feature>
<feature type="binding site" evidence="1">
    <location>
        <position position="171"/>
    </location>
    <ligand>
        <name>Mg(2+)</name>
        <dbReference type="ChEBI" id="CHEBI:18420"/>
        <label>2</label>
    </ligand>
</feature>
<feature type="binding site" evidence="1">
    <location>
        <position position="197"/>
    </location>
    <ligand>
        <name>D-ribose 5-phosphate</name>
        <dbReference type="ChEBI" id="CHEBI:78346"/>
    </ligand>
</feature>
<feature type="binding site" evidence="1">
    <location>
        <position position="221"/>
    </location>
    <ligand>
        <name>D-ribose 5-phosphate</name>
        <dbReference type="ChEBI" id="CHEBI:78346"/>
    </ligand>
</feature>
<feature type="binding site" evidence="1">
    <location>
        <begin position="225"/>
        <end position="229"/>
    </location>
    <ligand>
        <name>D-ribose 5-phosphate</name>
        <dbReference type="ChEBI" id="CHEBI:78346"/>
    </ligand>
</feature>
<evidence type="ECO:0000255" key="1">
    <source>
        <dbReference type="HAMAP-Rule" id="MF_00583"/>
    </source>
</evidence>
<reference key="1">
    <citation type="submission" date="2003-06" db="EMBL/GenBank/DDBJ databases">
        <title>The complete genome sequence of Haemophilus ducreyi.</title>
        <authorList>
            <person name="Munson R.S. Jr."/>
            <person name="Ray W.C."/>
            <person name="Mahairas G."/>
            <person name="Sabo P."/>
            <person name="Mungur R."/>
            <person name="Johnson L."/>
            <person name="Nguyen D."/>
            <person name="Wang J."/>
            <person name="Forst C."/>
            <person name="Hood L."/>
        </authorList>
    </citation>
    <scope>NUCLEOTIDE SEQUENCE [LARGE SCALE GENOMIC DNA]</scope>
    <source>
        <strain>35000HP / ATCC 700724</strain>
    </source>
</reference>
<sequence>MPDIKLFAGNATPELAKRISERLYISLGNATVGRFSDGEIQVQINENVRGSDVFIIQSTCAPTNDNLMELIVMVDALRRASAGRITAVIPYFGYSRQDRRVRSARVPITAKVVADFLSSVGVDRVLTCDLHAEQIQGFFDVPVDNVFGSPVLIDDILKKKDLVNPIVVSPDIGGVVRARAVAKLLNDTDMAIIDKRRPKANVSQVMHIIGDVTDRDCILVDDMIDTGGTLVKAAEALKERGARRVFAYATHAVFSGSAANNLANPALDEVVVTDTIPLSDEIEALNKVRVLTLSSMLAEAIRRISNEESISAMFDA</sequence>
<keyword id="KW-0067">ATP-binding</keyword>
<keyword id="KW-0963">Cytoplasm</keyword>
<keyword id="KW-0418">Kinase</keyword>
<keyword id="KW-0460">Magnesium</keyword>
<keyword id="KW-0479">Metal-binding</keyword>
<keyword id="KW-0545">Nucleotide biosynthesis</keyword>
<keyword id="KW-0547">Nucleotide-binding</keyword>
<keyword id="KW-1185">Reference proteome</keyword>
<keyword id="KW-0808">Transferase</keyword>
<name>KPRS_HAEDU</name>
<comment type="function">
    <text evidence="1">Involved in the biosynthesis of the central metabolite phospho-alpha-D-ribosyl-1-pyrophosphate (PRPP) via the transfer of pyrophosphoryl group from ATP to 1-hydroxyl of ribose-5-phosphate (Rib-5-P).</text>
</comment>
<comment type="catalytic activity">
    <reaction evidence="1">
        <text>D-ribose 5-phosphate + ATP = 5-phospho-alpha-D-ribose 1-diphosphate + AMP + H(+)</text>
        <dbReference type="Rhea" id="RHEA:15609"/>
        <dbReference type="ChEBI" id="CHEBI:15378"/>
        <dbReference type="ChEBI" id="CHEBI:30616"/>
        <dbReference type="ChEBI" id="CHEBI:58017"/>
        <dbReference type="ChEBI" id="CHEBI:78346"/>
        <dbReference type="ChEBI" id="CHEBI:456215"/>
        <dbReference type="EC" id="2.7.6.1"/>
    </reaction>
</comment>
<comment type="cofactor">
    <cofactor evidence="1">
        <name>Mg(2+)</name>
        <dbReference type="ChEBI" id="CHEBI:18420"/>
    </cofactor>
    <text evidence="1">Binds 2 Mg(2+) ions per subunit.</text>
</comment>
<comment type="pathway">
    <text evidence="1">Metabolic intermediate biosynthesis; 5-phospho-alpha-D-ribose 1-diphosphate biosynthesis; 5-phospho-alpha-D-ribose 1-diphosphate from D-ribose 5-phosphate (route I): step 1/1.</text>
</comment>
<comment type="subunit">
    <text evidence="1">Homohexamer.</text>
</comment>
<comment type="subcellular location">
    <subcellularLocation>
        <location evidence="1">Cytoplasm</location>
    </subcellularLocation>
</comment>
<comment type="similarity">
    <text evidence="1">Belongs to the ribose-phosphate pyrophosphokinase family. Class I subfamily.</text>
</comment>
<dbReference type="EC" id="2.7.6.1" evidence="1"/>
<dbReference type="EMBL" id="AE017143">
    <property type="protein sequence ID" value="AAP96404.1"/>
    <property type="molecule type" value="Genomic_DNA"/>
</dbReference>
<dbReference type="RefSeq" id="WP_010945436.1">
    <property type="nucleotide sequence ID" value="NC_002940.2"/>
</dbReference>
<dbReference type="SMR" id="Q7VL55"/>
<dbReference type="STRING" id="233412.HD_1627"/>
<dbReference type="KEGG" id="hdu:HD_1627"/>
<dbReference type="eggNOG" id="COG0462">
    <property type="taxonomic scope" value="Bacteria"/>
</dbReference>
<dbReference type="HOGENOM" id="CLU_033546_2_0_6"/>
<dbReference type="OrthoDB" id="9777067at2"/>
<dbReference type="UniPathway" id="UPA00087">
    <property type="reaction ID" value="UER00172"/>
</dbReference>
<dbReference type="Proteomes" id="UP000001022">
    <property type="component" value="Chromosome"/>
</dbReference>
<dbReference type="GO" id="GO:0005737">
    <property type="term" value="C:cytoplasm"/>
    <property type="evidence" value="ECO:0007669"/>
    <property type="project" value="UniProtKB-SubCell"/>
</dbReference>
<dbReference type="GO" id="GO:0002189">
    <property type="term" value="C:ribose phosphate diphosphokinase complex"/>
    <property type="evidence" value="ECO:0007669"/>
    <property type="project" value="TreeGrafter"/>
</dbReference>
<dbReference type="GO" id="GO:0005524">
    <property type="term" value="F:ATP binding"/>
    <property type="evidence" value="ECO:0007669"/>
    <property type="project" value="UniProtKB-KW"/>
</dbReference>
<dbReference type="GO" id="GO:0016301">
    <property type="term" value="F:kinase activity"/>
    <property type="evidence" value="ECO:0007669"/>
    <property type="project" value="UniProtKB-KW"/>
</dbReference>
<dbReference type="GO" id="GO:0000287">
    <property type="term" value="F:magnesium ion binding"/>
    <property type="evidence" value="ECO:0007669"/>
    <property type="project" value="UniProtKB-UniRule"/>
</dbReference>
<dbReference type="GO" id="GO:0004749">
    <property type="term" value="F:ribose phosphate diphosphokinase activity"/>
    <property type="evidence" value="ECO:0007669"/>
    <property type="project" value="UniProtKB-UniRule"/>
</dbReference>
<dbReference type="GO" id="GO:0006015">
    <property type="term" value="P:5-phosphoribose 1-diphosphate biosynthetic process"/>
    <property type="evidence" value="ECO:0007669"/>
    <property type="project" value="UniProtKB-UniRule"/>
</dbReference>
<dbReference type="GO" id="GO:0006164">
    <property type="term" value="P:purine nucleotide biosynthetic process"/>
    <property type="evidence" value="ECO:0007669"/>
    <property type="project" value="TreeGrafter"/>
</dbReference>
<dbReference type="GO" id="GO:0009156">
    <property type="term" value="P:ribonucleoside monophosphate biosynthetic process"/>
    <property type="evidence" value="ECO:0007669"/>
    <property type="project" value="InterPro"/>
</dbReference>
<dbReference type="CDD" id="cd06223">
    <property type="entry name" value="PRTases_typeI"/>
    <property type="match status" value="1"/>
</dbReference>
<dbReference type="FunFam" id="3.40.50.2020:FF:000001">
    <property type="entry name" value="Ribose-phosphate pyrophosphokinase"/>
    <property type="match status" value="1"/>
</dbReference>
<dbReference type="Gene3D" id="3.40.50.2020">
    <property type="match status" value="2"/>
</dbReference>
<dbReference type="HAMAP" id="MF_00583_B">
    <property type="entry name" value="RibP_PPkinase_B"/>
    <property type="match status" value="1"/>
</dbReference>
<dbReference type="InterPro" id="IPR000842">
    <property type="entry name" value="PRib_PP_synth_CS"/>
</dbReference>
<dbReference type="InterPro" id="IPR029099">
    <property type="entry name" value="Pribosyltran_N"/>
</dbReference>
<dbReference type="InterPro" id="IPR000836">
    <property type="entry name" value="PRibTrfase_dom"/>
</dbReference>
<dbReference type="InterPro" id="IPR029057">
    <property type="entry name" value="PRTase-like"/>
</dbReference>
<dbReference type="InterPro" id="IPR005946">
    <property type="entry name" value="Rib-P_diPkinase"/>
</dbReference>
<dbReference type="InterPro" id="IPR037515">
    <property type="entry name" value="Rib-P_diPkinase_bac"/>
</dbReference>
<dbReference type="NCBIfam" id="NF002320">
    <property type="entry name" value="PRK01259.1"/>
    <property type="match status" value="1"/>
</dbReference>
<dbReference type="NCBIfam" id="TIGR01251">
    <property type="entry name" value="ribP_PPkin"/>
    <property type="match status" value="1"/>
</dbReference>
<dbReference type="PANTHER" id="PTHR10210">
    <property type="entry name" value="RIBOSE-PHOSPHATE DIPHOSPHOKINASE FAMILY MEMBER"/>
    <property type="match status" value="1"/>
</dbReference>
<dbReference type="PANTHER" id="PTHR10210:SF41">
    <property type="entry name" value="RIBOSE-PHOSPHATE PYROPHOSPHOKINASE 1, CHLOROPLASTIC"/>
    <property type="match status" value="1"/>
</dbReference>
<dbReference type="Pfam" id="PF14572">
    <property type="entry name" value="Pribosyl_synth"/>
    <property type="match status" value="1"/>
</dbReference>
<dbReference type="Pfam" id="PF13793">
    <property type="entry name" value="Pribosyltran_N"/>
    <property type="match status" value="1"/>
</dbReference>
<dbReference type="SMART" id="SM01400">
    <property type="entry name" value="Pribosyltran_N"/>
    <property type="match status" value="1"/>
</dbReference>
<dbReference type="SUPFAM" id="SSF53271">
    <property type="entry name" value="PRTase-like"/>
    <property type="match status" value="1"/>
</dbReference>
<dbReference type="PROSITE" id="PS00114">
    <property type="entry name" value="PRPP_SYNTHASE"/>
    <property type="match status" value="1"/>
</dbReference>
<proteinExistence type="inferred from homology"/>
<accession>Q7VL55</accession>
<organism>
    <name type="scientific">Haemophilus ducreyi (strain 35000HP / ATCC 700724)</name>
    <dbReference type="NCBI Taxonomy" id="233412"/>
    <lineage>
        <taxon>Bacteria</taxon>
        <taxon>Pseudomonadati</taxon>
        <taxon>Pseudomonadota</taxon>
        <taxon>Gammaproteobacteria</taxon>
        <taxon>Pasteurellales</taxon>
        <taxon>Pasteurellaceae</taxon>
        <taxon>Haemophilus</taxon>
    </lineage>
</organism>